<organism>
    <name type="scientific">Gluconacetobacter diazotrophicus (strain ATCC 49037 / DSM 5601 / CCUG 37298 / CIP 103539 / LMG 7603 / PAl5)</name>
    <dbReference type="NCBI Taxonomy" id="272568"/>
    <lineage>
        <taxon>Bacteria</taxon>
        <taxon>Pseudomonadati</taxon>
        <taxon>Pseudomonadota</taxon>
        <taxon>Alphaproteobacteria</taxon>
        <taxon>Acetobacterales</taxon>
        <taxon>Acetobacteraceae</taxon>
        <taxon>Gluconacetobacter</taxon>
    </lineage>
</organism>
<accession>A9H271</accession>
<sequence>MADRPSWTGYLKVSLVTCPVTMMPATTGSETVRFHTINRRTGHRVVSRYVDAQSGAPVADDEQVLGYPRDDDHYVLLEDEELESVALDSTRTIDIESFVPAGSIGWVWYDAPHFLMPDDTIGVEAFAVIRAAMEAAGMVGIARLVLYRRERAVLLEPRGKGIVLWTLHDGNAVRNGGHPAARTRPASEAESADSPEMKLLTALIDRQTQPWDPEMVRDPVQERLLDIIAARQKGRKRAPAREAAKPKTGNVVSILDALRASLAQDGTS</sequence>
<proteinExistence type="inferred from homology"/>
<reference key="1">
    <citation type="journal article" date="2009" name="BMC Genomics">
        <title>Complete genome sequence of the sugarcane nitrogen-fixing endophyte Gluconacetobacter diazotrophicus Pal5.</title>
        <authorList>
            <person name="Bertalan M."/>
            <person name="Albano R."/>
            <person name="de Padua V."/>
            <person name="Rouws L."/>
            <person name="Rojas C."/>
            <person name="Hemerly A."/>
            <person name="Teixeira K."/>
            <person name="Schwab S."/>
            <person name="Araujo J."/>
            <person name="Oliveira A."/>
            <person name="Franca L."/>
            <person name="Magalhaes V."/>
            <person name="Alqueres S."/>
            <person name="Cardoso A."/>
            <person name="Almeida W."/>
            <person name="Loureiro M.M."/>
            <person name="Nogueira E."/>
            <person name="Cidade D."/>
            <person name="Oliveira D."/>
            <person name="Simao T."/>
            <person name="Macedo J."/>
            <person name="Valadao A."/>
            <person name="Dreschsel M."/>
            <person name="Freitas F."/>
            <person name="Vidal M."/>
            <person name="Guedes H."/>
            <person name="Rodrigues E."/>
            <person name="Meneses C."/>
            <person name="Brioso P."/>
            <person name="Pozzer L."/>
            <person name="Figueiredo D."/>
            <person name="Montano H."/>
            <person name="Junior J."/>
            <person name="de Souza Filho G."/>
            <person name="Martin Quintana Flores V."/>
            <person name="Ferreira B."/>
            <person name="Branco A."/>
            <person name="Gonzalez P."/>
            <person name="Guillobel H."/>
            <person name="Lemos M."/>
            <person name="Seibel L."/>
            <person name="Macedo J."/>
            <person name="Alves-Ferreira M."/>
            <person name="Sachetto-Martins G."/>
            <person name="Coelho A."/>
            <person name="Santos E."/>
            <person name="Amaral G."/>
            <person name="Neves A."/>
            <person name="Pacheco A.B."/>
            <person name="Carvalho D."/>
            <person name="Lery L."/>
            <person name="Bisch P."/>
            <person name="Rossle S.C."/>
            <person name="Urmenyi T."/>
            <person name="Rael Pereira A."/>
            <person name="Silva R."/>
            <person name="Rondinelli E."/>
            <person name="von Kruger W."/>
            <person name="Martins O."/>
            <person name="Baldani J.I."/>
            <person name="Ferreira P.C."/>
        </authorList>
    </citation>
    <scope>NUCLEOTIDE SEQUENCE [LARGE SCALE GENOMIC DNA]</scope>
    <source>
        <strain>ATCC 49037 / DSM 5601 / CCUG 37298 / CIP 103539 / LMG 7603 / PAl5</strain>
    </source>
</reference>
<reference key="2">
    <citation type="journal article" date="2010" name="Stand. Genomic Sci.">
        <title>Two genome sequences of the same bacterial strain, Gluconacetobacter diazotrophicus PAl 5, suggest a new standard in genome sequence submission.</title>
        <authorList>
            <person name="Giongo A."/>
            <person name="Tyler H.L."/>
            <person name="Zipperer U.N."/>
            <person name="Triplett E.W."/>
        </authorList>
    </citation>
    <scope>NUCLEOTIDE SEQUENCE [LARGE SCALE GENOMIC DNA]</scope>
    <source>
        <strain>ATCC 49037 / DSM 5601 / CCUG 37298 / CIP 103539 / LMG 7603 / PAl5</strain>
    </source>
</reference>
<comment type="function">
    <text evidence="1">With LigD forms a non-homologous end joining (NHEJ) DNA repair enzyme, which repairs dsDNA breaks with reduced fidelity. Binds linear dsDNA with 5'- and 3'- overhangs but not closed circular dsDNA nor ssDNA. Recruits and stimulates the ligase activity of LigD.</text>
</comment>
<comment type="subunit">
    <text evidence="1">Homodimer. Interacts with LigD.</text>
</comment>
<comment type="similarity">
    <text evidence="1">Belongs to the prokaryotic Ku family.</text>
</comment>
<gene>
    <name evidence="1" type="primary">ku</name>
    <name type="ordered locus">GDI0170</name>
    <name type="ordered locus">Gdia_2240</name>
</gene>
<protein>
    <recommendedName>
        <fullName evidence="1">Non-homologous end joining protein Ku</fullName>
    </recommendedName>
</protein>
<dbReference type="EMBL" id="CP001189">
    <property type="protein sequence ID" value="ACI51995.1"/>
    <property type="molecule type" value="Genomic_DNA"/>
</dbReference>
<dbReference type="EMBL" id="AM889285">
    <property type="protein sequence ID" value="CAP54113.1"/>
    <property type="molecule type" value="Genomic_DNA"/>
</dbReference>
<dbReference type="RefSeq" id="WP_012222409.1">
    <property type="nucleotide sequence ID" value="NC_010125.1"/>
</dbReference>
<dbReference type="SMR" id="A9H271"/>
<dbReference type="STRING" id="272568.GDI0170"/>
<dbReference type="KEGG" id="gdi:GDI0170"/>
<dbReference type="KEGG" id="gdj:Gdia_2240"/>
<dbReference type="eggNOG" id="COG1273">
    <property type="taxonomic scope" value="Bacteria"/>
</dbReference>
<dbReference type="HOGENOM" id="CLU_048975_0_0_5"/>
<dbReference type="OrthoDB" id="9780854at2"/>
<dbReference type="Proteomes" id="UP000001176">
    <property type="component" value="Chromosome"/>
</dbReference>
<dbReference type="GO" id="GO:0003690">
    <property type="term" value="F:double-stranded DNA binding"/>
    <property type="evidence" value="ECO:0007669"/>
    <property type="project" value="UniProtKB-UniRule"/>
</dbReference>
<dbReference type="GO" id="GO:0006310">
    <property type="term" value="P:DNA recombination"/>
    <property type="evidence" value="ECO:0007669"/>
    <property type="project" value="UniProtKB-KW"/>
</dbReference>
<dbReference type="GO" id="GO:0006303">
    <property type="term" value="P:double-strand break repair via nonhomologous end joining"/>
    <property type="evidence" value="ECO:0007669"/>
    <property type="project" value="UniProtKB-UniRule"/>
</dbReference>
<dbReference type="CDD" id="cd00789">
    <property type="entry name" value="KU_like"/>
    <property type="match status" value="1"/>
</dbReference>
<dbReference type="Gene3D" id="2.40.290.10">
    <property type="match status" value="1"/>
</dbReference>
<dbReference type="HAMAP" id="MF_01875">
    <property type="entry name" value="Prokaryotic_Ku"/>
    <property type="match status" value="1"/>
</dbReference>
<dbReference type="InterPro" id="IPR006164">
    <property type="entry name" value="Ku70/Ku80_beta-barrel_dom"/>
</dbReference>
<dbReference type="InterPro" id="IPR009187">
    <property type="entry name" value="Prok_Ku"/>
</dbReference>
<dbReference type="InterPro" id="IPR016194">
    <property type="entry name" value="SPOC-like_C_dom_sf"/>
</dbReference>
<dbReference type="NCBIfam" id="TIGR02772">
    <property type="entry name" value="Ku_bact"/>
    <property type="match status" value="1"/>
</dbReference>
<dbReference type="PANTHER" id="PTHR41251">
    <property type="entry name" value="NON-HOMOLOGOUS END JOINING PROTEIN KU"/>
    <property type="match status" value="1"/>
</dbReference>
<dbReference type="PANTHER" id="PTHR41251:SF1">
    <property type="entry name" value="NON-HOMOLOGOUS END JOINING PROTEIN KU"/>
    <property type="match status" value="1"/>
</dbReference>
<dbReference type="Pfam" id="PF02735">
    <property type="entry name" value="Ku"/>
    <property type="match status" value="1"/>
</dbReference>
<dbReference type="PIRSF" id="PIRSF006493">
    <property type="entry name" value="Prok_Ku"/>
    <property type="match status" value="1"/>
</dbReference>
<dbReference type="SMART" id="SM00559">
    <property type="entry name" value="Ku78"/>
    <property type="match status" value="1"/>
</dbReference>
<dbReference type="SUPFAM" id="SSF100939">
    <property type="entry name" value="SPOC domain-like"/>
    <property type="match status" value="1"/>
</dbReference>
<feature type="chain" id="PRO_0000389187" description="Non-homologous end joining protein Ku">
    <location>
        <begin position="1"/>
        <end position="268"/>
    </location>
</feature>
<feature type="domain" description="Ku" evidence="1">
    <location>
        <begin position="13"/>
        <end position="175"/>
    </location>
</feature>
<feature type="region of interest" description="Disordered" evidence="2">
    <location>
        <begin position="174"/>
        <end position="194"/>
    </location>
</feature>
<name>KU_GLUDA</name>
<evidence type="ECO:0000255" key="1">
    <source>
        <dbReference type="HAMAP-Rule" id="MF_01875"/>
    </source>
</evidence>
<evidence type="ECO:0000256" key="2">
    <source>
        <dbReference type="SAM" id="MobiDB-lite"/>
    </source>
</evidence>
<keyword id="KW-0227">DNA damage</keyword>
<keyword id="KW-0233">DNA recombination</keyword>
<keyword id="KW-0234">DNA repair</keyword>
<keyword id="KW-0238">DNA-binding</keyword>
<keyword id="KW-1185">Reference proteome</keyword>